<sequence>MTISPPERGSTAKTQVEKVDNPATFELFGKPGHFDRALAKGPKTTTWVWNLHANAHDFDSHTSDLEEVSRKIFSAHFGHLAVIFIWLSGAFFHGARFSNFSGWLADPTHVKPSAQVVWPVFGQEILNGDMGAGFQGIQITSGLFHVWRAWGITNETQLMSLAIGALVMAGLMLNAGVFHYHKAAPKLEWFQNVESMLNHHLAGLLGLGSLSWTGHLLHVSLPTTKLMDAIDAGQPLVLNGKTIASVADIPLPHEFFNQDLLAQLYPGFGAGIGAFFSGNWAAYSDFLTFKGGLNPVTGSMWMSDIAHHHLAIAVLFIVAGHMYRTNWGIGHSIKEILEGQKGDPLLFPATKGHDGLFEFMTTSWHAQLAVNLAMLGSLSIIVAQHMYAMPPYAYMSIDYPTQIGLFTHHMWIGGFLIVGAAAHAAIAMIRDYDPAKHVDNVLDRVLKARDALISHLNWVCIWLGFHSFGLYIHNDTMRALGRPQDMFSDSAIQLKPVFAQWIQGLHAAAAGSTAPNALAGVSEVFNGSVVAVGGKVAAAPIPLGTADFMVHHIHAFTIHVTVLILLKGVLYARNSRLIPDKANLGFRFPCDGPGRGGTCQVSAWDHVFLGLFWMYNSLSIVIFHFSWKMQSDVWGTVNADGSVQHITNGNFANSAITINGWLRDFLWAQAAQVINSYGSNTSAYGLMFLGAHFVWAFSLMFLFSGRGYWQELIESIVWAHNKLKVAPAIQPRALSITQGRAVGVAHYLLGGIATTWAFFHAHILVVG</sequence>
<evidence type="ECO:0000255" key="1">
    <source>
        <dbReference type="HAMAP-Rule" id="MF_00458"/>
    </source>
</evidence>
<evidence type="ECO:0000305" key="2"/>
<comment type="function">
    <text evidence="1">PsaA and PsaB bind P700, the primary electron donor of photosystem I (PSI), as well as the electron acceptors A0, A1 and FX. PSI is a plastocyanin/cytochrome c6-ferredoxin oxidoreductase, converting photonic excitation into a charge separation, which transfers an electron from the donor P700 chlorophyll pair to the spectroscopically characterized acceptors A0, A1, FX, FA and FB in turn. Oxidized P700 is reduced on the lumenal side of the thylakoid membrane by plastocyanin or cytochrome c6.</text>
</comment>
<comment type="catalytic activity">
    <reaction evidence="1">
        <text>reduced [plastocyanin] + hnu + oxidized [2Fe-2S]-[ferredoxin] = oxidized [plastocyanin] + reduced [2Fe-2S]-[ferredoxin]</text>
        <dbReference type="Rhea" id="RHEA:30407"/>
        <dbReference type="Rhea" id="RHEA-COMP:10000"/>
        <dbReference type="Rhea" id="RHEA-COMP:10001"/>
        <dbReference type="Rhea" id="RHEA-COMP:10039"/>
        <dbReference type="Rhea" id="RHEA-COMP:10040"/>
        <dbReference type="ChEBI" id="CHEBI:29036"/>
        <dbReference type="ChEBI" id="CHEBI:30212"/>
        <dbReference type="ChEBI" id="CHEBI:33737"/>
        <dbReference type="ChEBI" id="CHEBI:33738"/>
        <dbReference type="ChEBI" id="CHEBI:49552"/>
        <dbReference type="EC" id="1.97.1.12"/>
    </reaction>
</comment>
<comment type="cofactor">
    <text evidence="1">PSI electron transfer chain: 5 chlorophyll a, 1 chlorophyll a', 2 phylloquinones and 3 4Fe-4S clusters. PSI core antenna: 90 chlorophyll a, 22 carotenoids, 3 phospholipids and 1 galactolipid. P700 is a chlorophyll a/chlorophyll a' dimer, A0 is one or more chlorophyll a, A1 is one or both phylloquinones and FX is a shared 4Fe-4S iron-sulfur center.</text>
</comment>
<comment type="subunit">
    <text evidence="1">The PsaA/B heterodimer binds the P700 chlorophyll special pair and subsequent electron acceptors. PSI consists of a core antenna complex that captures photons, and an electron transfer chain that converts photonic excitation into a charge separation. The cyanobacterial PSI reaction center is composed of one copy each of PsaA,B,C,D,E,F,I,J,K,L,M and X, and forms trimeric complexes.</text>
</comment>
<comment type="subcellular location">
    <subcellularLocation>
        <location evidence="1">Cellular thylakoid membrane</location>
        <topology evidence="1">Multi-pass membrane protein</topology>
    </subcellularLocation>
</comment>
<comment type="similarity">
    <text evidence="1">Belongs to the PsaA/PsaB family.</text>
</comment>
<protein>
    <recommendedName>
        <fullName evidence="1">Photosystem I P700 chlorophyll a apoprotein A1</fullName>
        <ecNumber evidence="1">1.97.1.12</ecNumber>
    </recommendedName>
    <alternativeName>
        <fullName evidence="1">PsaA</fullName>
    </alternativeName>
</protein>
<gene>
    <name evidence="1" type="primary">psaA</name>
    <name type="ordered locus">SynWH7803_0391</name>
</gene>
<name>PSAA_SYNPW</name>
<dbReference type="EC" id="1.97.1.12" evidence="1"/>
<dbReference type="EMBL" id="AJ133190">
    <property type="protein sequence ID" value="CAB64208.1"/>
    <property type="molecule type" value="Genomic_DNA"/>
</dbReference>
<dbReference type="EMBL" id="CT971583">
    <property type="protein sequence ID" value="CAK22817.1"/>
    <property type="molecule type" value="Genomic_DNA"/>
</dbReference>
<dbReference type="SMR" id="Q9R6U0"/>
<dbReference type="STRING" id="32051.SynWH7803_0391"/>
<dbReference type="KEGG" id="syx:SynWH7803_0391"/>
<dbReference type="eggNOG" id="COG2885">
    <property type="taxonomic scope" value="Bacteria"/>
</dbReference>
<dbReference type="HOGENOM" id="CLU_016126_1_0_3"/>
<dbReference type="OrthoDB" id="499313at2"/>
<dbReference type="Proteomes" id="UP000001566">
    <property type="component" value="Chromosome"/>
</dbReference>
<dbReference type="GO" id="GO:0009522">
    <property type="term" value="C:photosystem I"/>
    <property type="evidence" value="ECO:0007669"/>
    <property type="project" value="UniProtKB-KW"/>
</dbReference>
<dbReference type="GO" id="GO:0031676">
    <property type="term" value="C:plasma membrane-derived thylakoid membrane"/>
    <property type="evidence" value="ECO:0007669"/>
    <property type="project" value="UniProtKB-SubCell"/>
</dbReference>
<dbReference type="GO" id="GO:0051539">
    <property type="term" value="F:4 iron, 4 sulfur cluster binding"/>
    <property type="evidence" value="ECO:0007669"/>
    <property type="project" value="UniProtKB-KW"/>
</dbReference>
<dbReference type="GO" id="GO:0016168">
    <property type="term" value="F:chlorophyll binding"/>
    <property type="evidence" value="ECO:0007669"/>
    <property type="project" value="UniProtKB-KW"/>
</dbReference>
<dbReference type="GO" id="GO:0009055">
    <property type="term" value="F:electron transfer activity"/>
    <property type="evidence" value="ECO:0007669"/>
    <property type="project" value="UniProtKB-UniRule"/>
</dbReference>
<dbReference type="GO" id="GO:0000287">
    <property type="term" value="F:magnesium ion binding"/>
    <property type="evidence" value="ECO:0007669"/>
    <property type="project" value="UniProtKB-UniRule"/>
</dbReference>
<dbReference type="GO" id="GO:0016491">
    <property type="term" value="F:oxidoreductase activity"/>
    <property type="evidence" value="ECO:0007669"/>
    <property type="project" value="UniProtKB-KW"/>
</dbReference>
<dbReference type="GO" id="GO:0015979">
    <property type="term" value="P:photosynthesis"/>
    <property type="evidence" value="ECO:0007669"/>
    <property type="project" value="UniProtKB-UniRule"/>
</dbReference>
<dbReference type="Gene3D" id="1.20.1130.10">
    <property type="entry name" value="Photosystem I PsaA/PsaB"/>
    <property type="match status" value="1"/>
</dbReference>
<dbReference type="HAMAP" id="MF_00458">
    <property type="entry name" value="PSI_PsaA"/>
    <property type="match status" value="1"/>
</dbReference>
<dbReference type="InterPro" id="IPR006243">
    <property type="entry name" value="PSI_PsaA"/>
</dbReference>
<dbReference type="InterPro" id="IPR001280">
    <property type="entry name" value="PSI_PsaA/B"/>
</dbReference>
<dbReference type="InterPro" id="IPR020586">
    <property type="entry name" value="PSI_PsaA/B_CS"/>
</dbReference>
<dbReference type="InterPro" id="IPR036408">
    <property type="entry name" value="PSI_PsaA/B_sf"/>
</dbReference>
<dbReference type="NCBIfam" id="TIGR01335">
    <property type="entry name" value="psaA"/>
    <property type="match status" value="1"/>
</dbReference>
<dbReference type="PANTHER" id="PTHR30128">
    <property type="entry name" value="OUTER MEMBRANE PROTEIN, OMPA-RELATED"/>
    <property type="match status" value="1"/>
</dbReference>
<dbReference type="PANTHER" id="PTHR30128:SF19">
    <property type="entry name" value="PHOTOSYSTEM I P700 CHLOROPHYLL A APOPROTEIN A1-RELATED"/>
    <property type="match status" value="1"/>
</dbReference>
<dbReference type="Pfam" id="PF00223">
    <property type="entry name" value="PsaA_PsaB"/>
    <property type="match status" value="1"/>
</dbReference>
<dbReference type="PIRSF" id="PIRSF002905">
    <property type="entry name" value="PSI_A"/>
    <property type="match status" value="1"/>
</dbReference>
<dbReference type="PRINTS" id="PR00257">
    <property type="entry name" value="PHOTSYSPSAAB"/>
</dbReference>
<dbReference type="SUPFAM" id="SSF81558">
    <property type="entry name" value="Photosystem I subunits PsaA/PsaB"/>
    <property type="match status" value="1"/>
</dbReference>
<dbReference type="PROSITE" id="PS00419">
    <property type="entry name" value="PHOTOSYSTEM_I_PSAAB"/>
    <property type="match status" value="1"/>
</dbReference>
<keyword id="KW-0004">4Fe-4S</keyword>
<keyword id="KW-0148">Chlorophyll</keyword>
<keyword id="KW-0157">Chromophore</keyword>
<keyword id="KW-0249">Electron transport</keyword>
<keyword id="KW-0408">Iron</keyword>
<keyword id="KW-0411">Iron-sulfur</keyword>
<keyword id="KW-0460">Magnesium</keyword>
<keyword id="KW-0472">Membrane</keyword>
<keyword id="KW-0479">Metal-binding</keyword>
<keyword id="KW-0560">Oxidoreductase</keyword>
<keyword id="KW-0602">Photosynthesis</keyword>
<keyword id="KW-0603">Photosystem I</keyword>
<keyword id="KW-1185">Reference proteome</keyword>
<keyword id="KW-0793">Thylakoid</keyword>
<keyword id="KW-0812">Transmembrane</keyword>
<keyword id="KW-1133">Transmembrane helix</keyword>
<keyword id="KW-0813">Transport</keyword>
<accession>Q9R6U0</accession>
<accession>A5GIQ2</accession>
<organism>
    <name type="scientific">Synechococcus sp. (strain WH7803)</name>
    <dbReference type="NCBI Taxonomy" id="32051"/>
    <lineage>
        <taxon>Bacteria</taxon>
        <taxon>Bacillati</taxon>
        <taxon>Cyanobacteriota</taxon>
        <taxon>Cyanophyceae</taxon>
        <taxon>Synechococcales</taxon>
        <taxon>Synechococcaceae</taxon>
        <taxon>Synechococcus</taxon>
    </lineage>
</organism>
<proteinExistence type="inferred from homology"/>
<reference key="1">
    <citation type="journal article" date="2000" name="Photosyn. Res.">
        <title>Rapid evolutionary divergence of photosystem I core subunits PsaA and PsaB in the marine prokaryote Prochlorococcus.</title>
        <authorList>
            <person name="van der Staay G.W.M."/>
            <person name="Moon-van der Staay S.Y."/>
            <person name="Garczarek L."/>
            <person name="Partensky F."/>
        </authorList>
    </citation>
    <scope>NUCLEOTIDE SEQUENCE [GENOMIC DNA]</scope>
</reference>
<reference key="2">
    <citation type="submission" date="2006-05" db="EMBL/GenBank/DDBJ databases">
        <authorList>
            <consortium name="Genoscope"/>
        </authorList>
    </citation>
    <scope>NUCLEOTIDE SEQUENCE [LARGE SCALE GENOMIC DNA]</scope>
    <source>
        <strain>WH7803</strain>
    </source>
</reference>
<feature type="chain" id="PRO_0000088597" description="Photosystem I P700 chlorophyll a apoprotein A1">
    <location>
        <begin position="1"/>
        <end position="767"/>
    </location>
</feature>
<feature type="transmembrane region" description="Helical; Name=I" evidence="1">
    <location>
        <begin position="72"/>
        <end position="95"/>
    </location>
</feature>
<feature type="transmembrane region" description="Helical; Name=II" evidence="1">
    <location>
        <begin position="158"/>
        <end position="181"/>
    </location>
</feature>
<feature type="transmembrane region" description="Helical; Name=III" evidence="1">
    <location>
        <begin position="197"/>
        <end position="221"/>
    </location>
</feature>
<feature type="transmembrane region" description="Helical; Name=IV" evidence="1">
    <location>
        <begin position="305"/>
        <end position="323"/>
    </location>
</feature>
<feature type="transmembrane region" description="Helical; Name=V" evidence="1">
    <location>
        <begin position="364"/>
        <end position="387"/>
    </location>
</feature>
<feature type="transmembrane region" description="Helical; Name=VI" evidence="1">
    <location>
        <begin position="403"/>
        <end position="429"/>
    </location>
</feature>
<feature type="transmembrane region" description="Helical; Name=VII" evidence="1">
    <location>
        <begin position="451"/>
        <end position="473"/>
    </location>
</feature>
<feature type="transmembrane region" description="Helical; Name=VIII" evidence="1">
    <location>
        <begin position="548"/>
        <end position="566"/>
    </location>
</feature>
<feature type="transmembrane region" description="Helical; Name=IX" evidence="1">
    <location>
        <begin position="606"/>
        <end position="627"/>
    </location>
</feature>
<feature type="transmembrane region" description="Helical; Name=X" evidence="1">
    <location>
        <begin position="681"/>
        <end position="703"/>
    </location>
</feature>
<feature type="transmembrane region" description="Helical; Name=XI" evidence="1">
    <location>
        <begin position="741"/>
        <end position="761"/>
    </location>
</feature>
<feature type="binding site" evidence="1">
    <location>
        <position position="590"/>
    </location>
    <ligand>
        <name>[4Fe-4S] cluster</name>
        <dbReference type="ChEBI" id="CHEBI:49883"/>
        <note>ligand shared between dimeric partners</note>
    </ligand>
</feature>
<feature type="binding site" evidence="1">
    <location>
        <position position="599"/>
    </location>
    <ligand>
        <name>[4Fe-4S] cluster</name>
        <dbReference type="ChEBI" id="CHEBI:49883"/>
        <note>ligand shared between dimeric partners</note>
    </ligand>
</feature>
<feature type="binding site" description="axial binding residue" evidence="1">
    <location>
        <position position="692"/>
    </location>
    <ligand>
        <name>chlorophyll a'</name>
        <dbReference type="ChEBI" id="CHEBI:189419"/>
        <label>A1</label>
    </ligand>
    <ligandPart>
        <name>Mg</name>
        <dbReference type="ChEBI" id="CHEBI:25107"/>
    </ligandPart>
</feature>
<feature type="binding site" description="axial binding residue" evidence="1">
    <location>
        <position position="700"/>
    </location>
    <ligand>
        <name>chlorophyll a</name>
        <dbReference type="ChEBI" id="CHEBI:58416"/>
        <label>A3</label>
    </ligand>
    <ligandPart>
        <name>Mg</name>
        <dbReference type="ChEBI" id="CHEBI:25107"/>
    </ligandPart>
</feature>
<feature type="binding site" evidence="1">
    <location>
        <position position="708"/>
    </location>
    <ligand>
        <name>chlorophyll a</name>
        <dbReference type="ChEBI" id="CHEBI:58416"/>
        <label>A3</label>
    </ligand>
</feature>
<feature type="binding site" evidence="1">
    <location>
        <position position="709"/>
    </location>
    <ligand>
        <name>phylloquinone</name>
        <dbReference type="ChEBI" id="CHEBI:18067"/>
        <label>A</label>
    </ligand>
</feature>
<feature type="sequence conflict" description="In Ref. 1; CAB64208." evidence="2" ref="1">
    <original>ELFG</original>
    <variation>GAVR</variation>
    <location>
        <begin position="26"/>
        <end position="29"/>
    </location>
</feature>
<feature type="sequence conflict" description="In Ref. 1; CAB64208." evidence="2" ref="1">
    <original>LL</original>
    <variation>FV</variation>
    <location>
        <begin position="260"/>
        <end position="261"/>
    </location>
</feature>
<feature type="sequence conflict" description="In Ref. 1; CAB64208." evidence="2" ref="1">
    <original>AI</original>
    <variation>DT</variation>
    <location>
        <begin position="425"/>
        <end position="426"/>
    </location>
</feature>
<feature type="sequence conflict" description="In Ref. 1; CAB64208." evidence="2" ref="1">
    <original>A</original>
    <variation>P</variation>
    <location>
        <position position="696"/>
    </location>
</feature>